<name>AIP_AMBVA</name>
<sequence>MKLHMLNMLNCLLLTVCDGHLHMHGNGATQVFKPRLVLKCPNAAQLIQPGKLQRQLLLP</sequence>
<proteinExistence type="inferred from homology"/>
<feature type="signal peptide" evidence="1">
    <location>
        <begin position="1"/>
        <end position="19"/>
    </location>
</feature>
<feature type="chain" id="PRO_5003251650" description="Anti-inflammatory peptide amregulin">
    <location>
        <begin position="20"/>
        <end position="59"/>
    </location>
</feature>
<accession>F0JA92</accession>
<keyword id="KW-0964">Secreted</keyword>
<keyword id="KW-0732">Signal</keyword>
<comment type="function">
    <text evidence="2">Anti-inflammatory peptide that may facilitate successful blood feeding of ticks and may lead to immunotolerance in its host. Inhibits the secretion of inflammatory factors in rat splenocytes, such as tumor necrosis factor-alpha (TNF), interleukin-1, interleukin-8 (CXCL8) and interferon-gamma (IFNG). In addition, shows strong free radical scavenging and antioxidant activities in vitro. In vivo, inhibits adjuvant-induced paw inflammation in mouse models.</text>
</comment>
<comment type="subcellular location">
    <subcellularLocation>
        <location evidence="4">Secreted</location>
    </subcellularLocation>
</comment>
<comment type="tissue specificity">
    <text evidence="4">Salivary glands.</text>
</comment>
<evidence type="ECO:0000255" key="1"/>
<evidence type="ECO:0000269" key="2">
    <source>
    </source>
</evidence>
<evidence type="ECO:0000303" key="3">
    <source>
    </source>
</evidence>
<evidence type="ECO:0000305" key="4">
    <source>
    </source>
</evidence>
<evidence type="ECO:0000312" key="5">
    <source>
        <dbReference type="EMBL" id="DAA34740.1"/>
    </source>
</evidence>
<protein>
    <recommendedName>
        <fullName evidence="3">Anti-inflammatory peptide amregulin</fullName>
    </recommendedName>
    <alternativeName>
        <fullName evidence="5">Hypothetical secreted peptide 866</fullName>
    </alternativeName>
</protein>
<dbReference type="EMBL" id="BK007793">
    <property type="protein sequence ID" value="DAA34740.1"/>
    <property type="molecule type" value="mRNA"/>
</dbReference>
<dbReference type="GO" id="GO:0005576">
    <property type="term" value="C:extracellular region"/>
    <property type="evidence" value="ECO:0007669"/>
    <property type="project" value="UniProtKB-SubCell"/>
</dbReference>
<organism>
    <name type="scientific">Amblyomma variegatum</name>
    <name type="common">Tropical bont tick</name>
    <dbReference type="NCBI Taxonomy" id="34610"/>
    <lineage>
        <taxon>Eukaryota</taxon>
        <taxon>Metazoa</taxon>
        <taxon>Ecdysozoa</taxon>
        <taxon>Arthropoda</taxon>
        <taxon>Chelicerata</taxon>
        <taxon>Arachnida</taxon>
        <taxon>Acari</taxon>
        <taxon>Parasitiformes</taxon>
        <taxon>Ixodida</taxon>
        <taxon>Ixodoidea</taxon>
        <taxon>Ixodidae</taxon>
        <taxon>Amblyomminae</taxon>
        <taxon>Amblyomma</taxon>
    </lineage>
</organism>
<reference evidence="5" key="1">
    <citation type="journal article" date="2011" name="BMC Genomics">
        <title>A further insight into the sialome of the tropical bont tick, Amblyomma variegatum.</title>
        <authorList>
            <person name="Ribeiro J.M."/>
            <person name="Anderson J.M."/>
            <person name="Manoukis N.C."/>
            <person name="Meng Z."/>
            <person name="Francishetti I.M."/>
        </authorList>
    </citation>
    <scope>NUCLEOTIDE SEQUENCE [MRNA]</scope>
    <source>
        <tissue>Salivary gland</tissue>
    </source>
</reference>
<reference key="2">
    <citation type="journal article" date="2016" name="Toxins">
        <title>An immunosuppressant peptide from the hard tick Amblyomma variegatum.</title>
        <authorList>
            <person name="Tian Y."/>
            <person name="Chen W."/>
            <person name="Mo G."/>
            <person name="Chen R."/>
            <person name="Fang M."/>
            <person name="Yedid G."/>
            <person name="Yan X."/>
        </authorList>
    </citation>
    <scope>FUNCTION</scope>
</reference>